<protein>
    <recommendedName>
        <fullName>E3 ubiquitin-protein ligase NEDD4-like</fullName>
        <ecNumber evidence="2">2.3.2.26</ecNumber>
        <ecNumber evidence="2">2.3.2.36</ecNumber>
    </recommendedName>
    <alternativeName>
        <fullName>HECT-type E3 ubiquitin transferase NED4L</fullName>
    </alternativeName>
    <alternativeName>
        <fullName>NEDD4.2</fullName>
    </alternativeName>
    <alternativeName>
        <fullName>Nedd4-2</fullName>
    </alternativeName>
</protein>
<dbReference type="EC" id="2.3.2.26" evidence="2"/>
<dbReference type="EC" id="2.3.2.36" evidence="2"/>
<dbReference type="EMBL" id="AF277232">
    <property type="protein sequence ID" value="AAK00809.1"/>
    <property type="molecule type" value="mRNA"/>
</dbReference>
<dbReference type="EMBL" id="BC039746">
    <property type="protein sequence ID" value="AAH39746.1"/>
    <property type="molecule type" value="mRNA"/>
</dbReference>
<dbReference type="EMBL" id="BC071210">
    <property type="protein sequence ID" value="AAH71210.1"/>
    <property type="molecule type" value="mRNA"/>
</dbReference>
<dbReference type="EMBL" id="AK042621">
    <property type="protein sequence ID" value="BAC31307.1"/>
    <property type="status" value="ALT_INIT"/>
    <property type="molecule type" value="mRNA"/>
</dbReference>
<dbReference type="CCDS" id="CCDS29305.1">
    <molecule id="Q8CFI0-2"/>
</dbReference>
<dbReference type="PDB" id="1WR3">
    <property type="method" value="NMR"/>
    <property type="chains" value="A=221-254"/>
</dbReference>
<dbReference type="PDB" id="1WR4">
    <property type="method" value="NMR"/>
    <property type="chains" value="A=414-447"/>
</dbReference>
<dbReference type="PDB" id="1WR7">
    <property type="method" value="NMR"/>
    <property type="chains" value="A=525-560"/>
</dbReference>
<dbReference type="PDBsum" id="1WR3"/>
<dbReference type="PDBsum" id="1WR4"/>
<dbReference type="PDBsum" id="1WR7"/>
<dbReference type="BMRB" id="Q8CFI0"/>
<dbReference type="SMR" id="Q8CFI0"/>
<dbReference type="DIP" id="DIP-48843N"/>
<dbReference type="FunCoup" id="Q8CFI0">
    <property type="interactions" value="1825"/>
</dbReference>
<dbReference type="IntAct" id="Q8CFI0">
    <property type="interactions" value="10"/>
</dbReference>
<dbReference type="MINT" id="Q8CFI0"/>
<dbReference type="STRING" id="10090.ENSMUSP00000158026"/>
<dbReference type="TCDB" id="8.A.30.1.1">
    <property type="family name" value="the nedd4-family interacting protein-2 (nedd4) family"/>
</dbReference>
<dbReference type="GlyGen" id="Q8CFI0">
    <property type="glycosylation" value="4 sites, 1 O-linked glycan (2 sites)"/>
</dbReference>
<dbReference type="iPTMnet" id="Q8CFI0"/>
<dbReference type="PhosphoSitePlus" id="Q8CFI0"/>
<dbReference type="jPOST" id="Q8CFI0"/>
<dbReference type="PaxDb" id="10090-ENSMUSP00000132838"/>
<dbReference type="PeptideAtlas" id="Q8CFI0"/>
<dbReference type="ProteomicsDB" id="253057">
    <molecule id="Q8CFI0-1"/>
</dbReference>
<dbReference type="ProteomicsDB" id="253058">
    <molecule id="Q8CFI0-2"/>
</dbReference>
<dbReference type="ProteomicsDB" id="253059">
    <molecule id="Q8CFI0-3"/>
</dbReference>
<dbReference type="Pumba" id="Q8CFI0"/>
<dbReference type="Antibodypedia" id="5421">
    <property type="antibodies" value="263 antibodies from 33 providers"/>
</dbReference>
<dbReference type="Ensembl" id="ENSMUST00000237410.2">
    <molecule id="Q8CFI0-3"/>
    <property type="protein sequence ID" value="ENSMUSP00000158044.2"/>
    <property type="gene ID" value="ENSMUSG00000024589.19"/>
</dbReference>
<dbReference type="UCSC" id="uc008fen.2">
    <molecule id="Q8CFI0-3"/>
    <property type="organism name" value="mouse"/>
</dbReference>
<dbReference type="AGR" id="MGI:1933754"/>
<dbReference type="MGI" id="MGI:1933754">
    <property type="gene designation" value="Nedd4l"/>
</dbReference>
<dbReference type="VEuPathDB" id="HostDB:ENSMUSG00000024589"/>
<dbReference type="eggNOG" id="KOG0940">
    <property type="taxonomic scope" value="Eukaryota"/>
</dbReference>
<dbReference type="GeneTree" id="ENSGT00940000156873"/>
<dbReference type="InParanoid" id="Q8CFI0"/>
<dbReference type="PhylomeDB" id="Q8CFI0"/>
<dbReference type="Reactome" id="R-MMU-2173795">
    <property type="pathway name" value="Downregulation of SMAD2/3:SMAD4 transcriptional activity"/>
</dbReference>
<dbReference type="Reactome" id="R-MMU-2672351">
    <property type="pathway name" value="Stimuli-sensing channels"/>
</dbReference>
<dbReference type="Reactome" id="R-MMU-983168">
    <property type="pathway name" value="Antigen processing: Ubiquitination &amp; Proteasome degradation"/>
</dbReference>
<dbReference type="UniPathway" id="UPA00143"/>
<dbReference type="ChiTaRS" id="Nedd4l">
    <property type="organism name" value="mouse"/>
</dbReference>
<dbReference type="EvolutionaryTrace" id="Q8CFI0"/>
<dbReference type="PRO" id="PR:Q8CFI0"/>
<dbReference type="Proteomes" id="UP000000589">
    <property type="component" value="Chromosome 18"/>
</dbReference>
<dbReference type="RNAct" id="Q8CFI0">
    <property type="molecule type" value="protein"/>
</dbReference>
<dbReference type="Bgee" id="ENSMUSG00000024589">
    <property type="expression patterns" value="Expressed in caudate-putamen and 271 other cell types or tissues"/>
</dbReference>
<dbReference type="ExpressionAtlas" id="Q8CFI0">
    <property type="expression patterns" value="baseline and differential"/>
</dbReference>
<dbReference type="GO" id="GO:0098978">
    <property type="term" value="C:glutamatergic synapse"/>
    <property type="evidence" value="ECO:0000314"/>
    <property type="project" value="SynGO"/>
</dbReference>
<dbReference type="GO" id="GO:0005794">
    <property type="term" value="C:Golgi apparatus"/>
    <property type="evidence" value="ECO:0007669"/>
    <property type="project" value="UniProtKB-SubCell"/>
</dbReference>
<dbReference type="GO" id="GO:0005771">
    <property type="term" value="C:multivesicular body"/>
    <property type="evidence" value="ECO:0007669"/>
    <property type="project" value="UniProtKB-SubCell"/>
</dbReference>
<dbReference type="GO" id="GO:0098794">
    <property type="term" value="C:postsynapse"/>
    <property type="evidence" value="ECO:0007669"/>
    <property type="project" value="GOC"/>
</dbReference>
<dbReference type="GO" id="GO:0019871">
    <property type="term" value="F:sodium channel inhibitor activity"/>
    <property type="evidence" value="ECO:0000314"/>
    <property type="project" value="MGI"/>
</dbReference>
<dbReference type="GO" id="GO:0061630">
    <property type="term" value="F:ubiquitin protein ligase activity"/>
    <property type="evidence" value="ECO:0000314"/>
    <property type="project" value="MGI"/>
</dbReference>
<dbReference type="GO" id="GO:0030154">
    <property type="term" value="P:cell differentiation"/>
    <property type="evidence" value="ECO:0007669"/>
    <property type="project" value="UniProtKB-KW"/>
</dbReference>
<dbReference type="GO" id="GO:0051649">
    <property type="term" value="P:establishment of localization in cell"/>
    <property type="evidence" value="ECO:0000315"/>
    <property type="project" value="MGI"/>
</dbReference>
<dbReference type="GO" id="GO:0010766">
    <property type="term" value="P:negative regulation of sodium ion transport"/>
    <property type="evidence" value="ECO:0000314"/>
    <property type="project" value="MGI"/>
</dbReference>
<dbReference type="GO" id="GO:0003085">
    <property type="term" value="P:negative regulation of systemic arterial blood pressure"/>
    <property type="evidence" value="ECO:0000315"/>
    <property type="project" value="MGI"/>
</dbReference>
<dbReference type="GO" id="GO:0010765">
    <property type="term" value="P:positive regulation of sodium ion transport"/>
    <property type="evidence" value="ECO:0000316"/>
    <property type="project" value="MGI"/>
</dbReference>
<dbReference type="GO" id="GO:0016567">
    <property type="term" value="P:protein ubiquitination"/>
    <property type="evidence" value="ECO:0000250"/>
    <property type="project" value="UniProtKB"/>
</dbReference>
<dbReference type="GO" id="GO:2000810">
    <property type="term" value="P:regulation of bicellular tight junction assembly"/>
    <property type="evidence" value="ECO:0000314"/>
    <property type="project" value="MGI"/>
</dbReference>
<dbReference type="GO" id="GO:0099149">
    <property type="term" value="P:regulation of postsynaptic neurotransmitter receptor internalization"/>
    <property type="evidence" value="ECO:0000314"/>
    <property type="project" value="SynGO"/>
</dbReference>
<dbReference type="GO" id="GO:0031647">
    <property type="term" value="P:regulation of protein stability"/>
    <property type="evidence" value="ECO:0000250"/>
    <property type="project" value="UniProtKB"/>
</dbReference>
<dbReference type="GO" id="GO:1902305">
    <property type="term" value="P:regulation of sodium ion transmembrane transport"/>
    <property type="evidence" value="ECO:0000250"/>
    <property type="project" value="UniProtKB"/>
</dbReference>
<dbReference type="GO" id="GO:0002028">
    <property type="term" value="P:regulation of sodium ion transport"/>
    <property type="evidence" value="ECO:0000314"/>
    <property type="project" value="MGI"/>
</dbReference>
<dbReference type="GO" id="GO:0140252">
    <property type="term" value="P:regulation protein catabolic process at postsynapse"/>
    <property type="evidence" value="ECO:0000314"/>
    <property type="project" value="SynGO"/>
</dbReference>
<dbReference type="GO" id="GO:0009651">
    <property type="term" value="P:response to salt stress"/>
    <property type="evidence" value="ECO:0000315"/>
    <property type="project" value="MGI"/>
</dbReference>
<dbReference type="GO" id="GO:0006814">
    <property type="term" value="P:sodium ion transport"/>
    <property type="evidence" value="ECO:0000315"/>
    <property type="project" value="MGI"/>
</dbReference>
<dbReference type="GO" id="GO:0006511">
    <property type="term" value="P:ubiquitin-dependent protein catabolic process"/>
    <property type="evidence" value="ECO:0000314"/>
    <property type="project" value="MGI"/>
</dbReference>
<dbReference type="CDD" id="cd04033">
    <property type="entry name" value="C2_NEDD4_NEDD4L"/>
    <property type="match status" value="1"/>
</dbReference>
<dbReference type="CDD" id="cd00078">
    <property type="entry name" value="HECTc"/>
    <property type="match status" value="1"/>
</dbReference>
<dbReference type="CDD" id="cd00201">
    <property type="entry name" value="WW"/>
    <property type="match status" value="4"/>
</dbReference>
<dbReference type="FunFam" id="2.20.70.10:FF:000017">
    <property type="entry name" value="E3 ubiquitin-protein ligase"/>
    <property type="match status" value="1"/>
</dbReference>
<dbReference type="FunFam" id="3.90.1750.10:FF:000026">
    <property type="entry name" value="E3 ubiquitin-protein ligase HACE1"/>
    <property type="match status" value="1"/>
</dbReference>
<dbReference type="FunFam" id="3.30.2160.10:FF:000001">
    <property type="entry name" value="E3 ubiquitin-protein ligase NEDD4-like"/>
    <property type="match status" value="1"/>
</dbReference>
<dbReference type="FunFam" id="3.30.2410.10:FF:000001">
    <property type="entry name" value="E3 ubiquitin-protein ligase NEDD4-like"/>
    <property type="match status" value="1"/>
</dbReference>
<dbReference type="FunFam" id="3.90.1750.10:FF:000001">
    <property type="entry name" value="E3 ubiquitin-protein ligase NEDD4-like"/>
    <property type="match status" value="1"/>
</dbReference>
<dbReference type="FunFam" id="2.20.70.10:FF:000006">
    <property type="entry name" value="E3 ubiquitin-protein ligase NEDD4-like protein"/>
    <property type="match status" value="1"/>
</dbReference>
<dbReference type="FunFam" id="2.20.70.10:FF:000008">
    <property type="entry name" value="E3 ubiquitin-protein ligase NEDD4-like protein"/>
    <property type="match status" value="1"/>
</dbReference>
<dbReference type="FunFam" id="2.20.70.10:FF:000025">
    <property type="entry name" value="E3 ubiquitin-protein ligase NEDD4-like protein"/>
    <property type="match status" value="1"/>
</dbReference>
<dbReference type="FunFam" id="2.60.40.150:FF:000047">
    <property type="entry name" value="Putative E3 ubiquitin-protein ligase NEDD4-like"/>
    <property type="match status" value="1"/>
</dbReference>
<dbReference type="Gene3D" id="2.20.70.10">
    <property type="match status" value="3"/>
</dbReference>
<dbReference type="Gene3D" id="2.60.40.150">
    <property type="entry name" value="C2 domain"/>
    <property type="match status" value="1"/>
</dbReference>
<dbReference type="Gene3D" id="3.30.2160.10">
    <property type="entry name" value="Hect, E3 ligase catalytic domain"/>
    <property type="match status" value="1"/>
</dbReference>
<dbReference type="Gene3D" id="3.30.2410.10">
    <property type="entry name" value="Hect, E3 ligase catalytic domain"/>
    <property type="match status" value="1"/>
</dbReference>
<dbReference type="Gene3D" id="3.90.1750.10">
    <property type="entry name" value="Hect, E3 ligase catalytic domains"/>
    <property type="match status" value="1"/>
</dbReference>
<dbReference type="InterPro" id="IPR000008">
    <property type="entry name" value="C2_dom"/>
</dbReference>
<dbReference type="InterPro" id="IPR035892">
    <property type="entry name" value="C2_domain_sf"/>
</dbReference>
<dbReference type="InterPro" id="IPR024928">
    <property type="entry name" value="E3_ub_ligase_SMURF1"/>
</dbReference>
<dbReference type="InterPro" id="IPR050409">
    <property type="entry name" value="E3_ubiq-protein_ligase"/>
</dbReference>
<dbReference type="InterPro" id="IPR000569">
    <property type="entry name" value="HECT_dom"/>
</dbReference>
<dbReference type="InterPro" id="IPR035983">
    <property type="entry name" value="Hect_E3_ubiquitin_ligase"/>
</dbReference>
<dbReference type="InterPro" id="IPR001202">
    <property type="entry name" value="WW_dom"/>
</dbReference>
<dbReference type="InterPro" id="IPR036020">
    <property type="entry name" value="WW_dom_sf"/>
</dbReference>
<dbReference type="PANTHER" id="PTHR11254:SF443">
    <property type="entry name" value="E3 UBIQUITIN-PROTEIN LIGASE NEDD4-LIKE"/>
    <property type="match status" value="1"/>
</dbReference>
<dbReference type="PANTHER" id="PTHR11254">
    <property type="entry name" value="HECT DOMAIN UBIQUITIN-PROTEIN LIGASE"/>
    <property type="match status" value="1"/>
</dbReference>
<dbReference type="Pfam" id="PF00168">
    <property type="entry name" value="C2"/>
    <property type="match status" value="1"/>
</dbReference>
<dbReference type="Pfam" id="PF00632">
    <property type="entry name" value="HECT"/>
    <property type="match status" value="1"/>
</dbReference>
<dbReference type="Pfam" id="PF00397">
    <property type="entry name" value="WW"/>
    <property type="match status" value="4"/>
</dbReference>
<dbReference type="PIRSF" id="PIRSF001569">
    <property type="entry name" value="E3_ub_ligase_SMURF1"/>
    <property type="match status" value="1"/>
</dbReference>
<dbReference type="PRINTS" id="PR00360">
    <property type="entry name" value="C2DOMAIN"/>
</dbReference>
<dbReference type="SMART" id="SM00239">
    <property type="entry name" value="C2"/>
    <property type="match status" value="1"/>
</dbReference>
<dbReference type="SMART" id="SM00119">
    <property type="entry name" value="HECTc"/>
    <property type="match status" value="1"/>
</dbReference>
<dbReference type="SMART" id="SM00456">
    <property type="entry name" value="WW"/>
    <property type="match status" value="4"/>
</dbReference>
<dbReference type="SUPFAM" id="SSF49562">
    <property type="entry name" value="C2 domain (Calcium/lipid-binding domain, CaLB)"/>
    <property type="match status" value="1"/>
</dbReference>
<dbReference type="SUPFAM" id="SSF56204">
    <property type="entry name" value="Hect, E3 ligase catalytic domain"/>
    <property type="match status" value="1"/>
</dbReference>
<dbReference type="SUPFAM" id="SSF51045">
    <property type="entry name" value="WW domain"/>
    <property type="match status" value="4"/>
</dbReference>
<dbReference type="PROSITE" id="PS50004">
    <property type="entry name" value="C2"/>
    <property type="match status" value="1"/>
</dbReference>
<dbReference type="PROSITE" id="PS50237">
    <property type="entry name" value="HECT"/>
    <property type="match status" value="1"/>
</dbReference>
<dbReference type="PROSITE" id="PS01159">
    <property type="entry name" value="WW_DOMAIN_1"/>
    <property type="match status" value="4"/>
</dbReference>
<dbReference type="PROSITE" id="PS50020">
    <property type="entry name" value="WW_DOMAIN_2"/>
    <property type="match status" value="4"/>
</dbReference>
<keyword id="KW-0002">3D-structure</keyword>
<keyword id="KW-0025">Alternative splicing</keyword>
<keyword id="KW-0963">Cytoplasm</keyword>
<keyword id="KW-0221">Differentiation</keyword>
<keyword id="KW-0967">Endosome</keyword>
<keyword id="KW-0333">Golgi apparatus</keyword>
<keyword id="KW-0597">Phosphoprotein</keyword>
<keyword id="KW-1185">Reference proteome</keyword>
<keyword id="KW-0677">Repeat</keyword>
<keyword id="KW-0808">Transferase</keyword>
<keyword id="KW-0832">Ubl conjugation</keyword>
<keyword id="KW-0833">Ubl conjugation pathway</keyword>
<proteinExistence type="evidence at protein level"/>
<gene>
    <name type="primary">Nedd4l</name>
    <name type="synonym">Kiaa0439</name>
    <name type="synonym">Nedd4b</name>
</gene>
<comment type="function">
    <text evidence="3 8 9 10 12 14">E3 ubiquitin-protein ligase that mediates the polyubiquitination of lysine and cysteine residues on target proteins and is thereby implicated in the regulation of various signaling pathways including autophagy, innate immunity or DNA repair. Inhibits TGF-beta signaling by triggering SMAD2 and TGFBR1 ubiquitination and proteasome-dependent degradation. Downregulates autophagy and cell growth by ubiquitinating and reducing cellular ULK1 or ASCT2 levels. Promotes ubiquitination and internalization of various plasma membrane channels such as ENaC, SCN2A/Nav1.2, SCN3A/Nav1.3, SCN5A/Nav1.5, SCN9A/Nav1.7, SCN10A/Nav1.8, KCNA3/Kv1.3, KCNH2, EAAT1, KCNQ2/Kv7.2, KCNQ3/Kv7.3 or CLC5 (PubMed:15123669). Promotes ubiquitination and degradation of SGK1 and TNK2. Ubiquitinates BRAT1 and this ubiquitination is enhanced in the presence of NDFIP1. Plays a role in dendrite formation by melanocytes (By similarity). Involved in the regulation of TOR signaling (By similarity). Ubiquitinates and regulates protein levels of NTRK1 once this one is activated by NGF. Plays a role in antiviral innate immunity by catalyzing 'Lys-29'-linked cysteine ubiquitination of TRAF3, resulting in enhanced 'Lys-48' and 'Lys-63'-linked ubiquitination of TRAF3 (By similarity). Ubiquitinates TTYH2 and TYYH3 and regulates protein levels of TTYH2 (By similarity).</text>
</comment>
<comment type="catalytic activity">
    <reaction evidence="3">
        <text>S-ubiquitinyl-[E2 ubiquitin-conjugating enzyme]-L-cysteine + [acceptor protein]-L-lysine = [E2 ubiquitin-conjugating enzyme]-L-cysteine + N(6)-ubiquitinyl-[acceptor protein]-L-lysine.</text>
        <dbReference type="EC" id="2.3.2.26"/>
    </reaction>
</comment>
<comment type="catalytic activity">
    <reaction evidence="3">
        <text>[E2 ubiquitin-conjugating enzyme]-S-ubiquitinyl-L-cysteine + [acceptor protein]-L-cysteine = [E2 ubiquitin-conjugating enzyme]-L-cysteine + [acceptor protein]-S-ubiquitinyl-L-cysteine.</text>
        <dbReference type="EC" id="2.3.2.36"/>
    </reaction>
</comment>
<comment type="activity regulation">
    <text evidence="3">Activated by NDFIP1- and NDFIP2-binding.</text>
</comment>
<comment type="pathway">
    <text evidence="21">Protein modification; protein ubiquitination.</text>
</comment>
<comment type="subunit">
    <text evidence="3 10 11 12 13 14">Interacts with UBE2E3 (PubMed:14993279). Interacts with NDFIP1; this interaction activates the E3 ubiquitin-protein ligase (By similarity). Interacts with NDFIP2; this interaction activates the E3 ubiquitin-protein ligase (PubMed:12050153). Interacts (via WW domains) with SCN1A (PubMed:15123669). Interacts (via WW domains) with SCN2A (PubMed:15123669). Interacts (via WW domains) with SCN3A (PubMed:15123669). Interacts (via WW domains) with SCN5A (PubMed:15123669). Interacts (via WW domains) with SCN8A (PubMed:15123669). Interacts (via WW domains) with SCN9A (PubMed:15123669). Interacts (via WW domains) with SCN10A (PubMed:15123669). Interacts (via WW domains) with CLCN5 (By similarity). Interacts with SMAD2 (By similarity). Interacts with SMAD3 (By similarity). Interacts with SMAD6 (By similarity). Interacts with SMAD7 (By similarity). The phosphorylated form interacts with 14-3-3 proteins (By similarity). Interacts with TNK2 (By similarity). Interacts with WNK1 (By similarity). Interacts with SGK1 (By similarity). Interacts (via C2 domain) with NPC2 (By similarity). Interacts with ARRDC4 (By similarity). Interacts with KCNQ1; promotes internalization of KCNQ1 (By similarity). Interacts (via domains WW1, 3 and 4) with USP36; the interaction inhibits ubiquitination of, at least, NTRK1, KCNQ2 and KCNQ3 by NEDD4L (By similarity). Interacts with PRRG4 (via cytoplasmic domain) (By similarity). Interacts with LDLRAD3; the interaction is direct (By similarity). Interacts with UBE2D2 (By similarity). Interacts with TTYH2 and TTYH3 (By similarity).</text>
</comment>
<comment type="interaction">
    <interactant intactId="EBI-8046183">
        <id>Q8CFI0</id>
    </interactant>
    <interactant intactId="EBI-397757">
        <id>Q99N57</id>
        <label>Raf1</label>
    </interactant>
    <organismsDiffer>false</organismsDiffer>
    <experiments>2</experiments>
</comment>
<comment type="interaction">
    <interactant intactId="EBI-8046183">
        <id>Q8CFI0</id>
    </interactant>
    <interactant intactId="EBI-15771036">
        <id>Q9Z2S7-3</id>
        <label>Tsc22d3</label>
    </interactant>
    <organismsDiffer>false</organismsDiffer>
    <experiments>2</experiments>
</comment>
<comment type="subcellular location">
    <subcellularLocation>
        <location evidence="11">Cytoplasm</location>
    </subcellularLocation>
    <subcellularLocation>
        <location evidence="3">Golgi apparatus</location>
    </subcellularLocation>
    <subcellularLocation>
        <location evidence="3">Endosome</location>
        <location evidence="3">Multivesicular body</location>
    </subcellularLocation>
</comment>
<comment type="alternative products">
    <event type="alternative splicing"/>
    <isoform>
        <id>Q8CFI0-1</id>
        <name>1</name>
        <sequence type="displayed"/>
    </isoform>
    <isoform>
        <id>Q8CFI0-2</id>
        <name>2</name>
        <sequence type="described" ref="VSP_015450"/>
    </isoform>
    <isoform>
        <id>Q8CFI0-3</id>
        <name>3</name>
        <sequence type="described" ref="VSP_015453"/>
    </isoform>
</comment>
<comment type="tissue specificity">
    <text evidence="8 9">Highly expressed in liver and kidney. Also expressed in heart, brain and lung. Isoform 1 is expressed in kidney, lung and gut. Isoform 3 is ubiquitously expressed.</text>
</comment>
<comment type="developmental stage">
    <text evidence="16">In the developing brain, it is homogenously distributed in the cortical plate, ventricular zone and ganglionic eminences at 15 dpc. A peak of expression in the cortex is observed at 16.5 dpc.</text>
</comment>
<comment type="domain">
    <text evidence="10 12 14">WW domains are involved in recognizing PPxY motifs in substrate proteins.</text>
</comment>
<comment type="PTM">
    <text evidence="1 10 15">Phosphorylated; which impairs interaction with SCNN. Interaction with YWHAH inhibits dephosphorylation (By similarity). Aldosterone induces Ser-477 phosphorylation by SGK1.</text>
</comment>
<comment type="PTM">
    <text evidence="3">Auto-ubiquitinated. Deubiquitinated by USP36, no effect on NEDD4L protein levels. Both proteins interact and regulate each other's ubiquitination levels.</text>
</comment>
<comment type="sequence caution" evidence="21">
    <conflict type="erroneous initiation">
        <sequence resource="EMBL-CDS" id="BAC31307"/>
    </conflict>
    <text>Truncated N-terminus.</text>
</comment>
<organism>
    <name type="scientific">Mus musculus</name>
    <name type="common">Mouse</name>
    <dbReference type="NCBI Taxonomy" id="10090"/>
    <lineage>
        <taxon>Eukaryota</taxon>
        <taxon>Metazoa</taxon>
        <taxon>Chordata</taxon>
        <taxon>Craniata</taxon>
        <taxon>Vertebrata</taxon>
        <taxon>Euteleostomi</taxon>
        <taxon>Mammalia</taxon>
        <taxon>Eutheria</taxon>
        <taxon>Euarchontoglires</taxon>
        <taxon>Glires</taxon>
        <taxon>Rodentia</taxon>
        <taxon>Myomorpha</taxon>
        <taxon>Muroidea</taxon>
        <taxon>Muridae</taxon>
        <taxon>Murinae</taxon>
        <taxon>Mus</taxon>
        <taxon>Mus</taxon>
    </lineage>
</organism>
<evidence type="ECO:0000250" key="1"/>
<evidence type="ECO:0000250" key="2">
    <source>
        <dbReference type="UniProtKB" id="P46934"/>
    </source>
</evidence>
<evidence type="ECO:0000250" key="3">
    <source>
        <dbReference type="UniProtKB" id="Q96PU5"/>
    </source>
</evidence>
<evidence type="ECO:0000255" key="4">
    <source>
        <dbReference type="PROSITE-ProRule" id="PRU00041"/>
    </source>
</evidence>
<evidence type="ECO:0000255" key="5">
    <source>
        <dbReference type="PROSITE-ProRule" id="PRU00104"/>
    </source>
</evidence>
<evidence type="ECO:0000255" key="6">
    <source>
        <dbReference type="PROSITE-ProRule" id="PRU00224"/>
    </source>
</evidence>
<evidence type="ECO:0000256" key="7">
    <source>
        <dbReference type="SAM" id="MobiDB-lite"/>
    </source>
</evidence>
<evidence type="ECO:0000269" key="8">
    <source>
    </source>
</evidence>
<evidence type="ECO:0000269" key="9">
    <source>
    </source>
</evidence>
<evidence type="ECO:0000269" key="10">
    <source>
    </source>
</evidence>
<evidence type="ECO:0000269" key="11">
    <source>
    </source>
</evidence>
<evidence type="ECO:0000269" key="12">
    <source>
    </source>
</evidence>
<evidence type="ECO:0000269" key="13">
    <source>
    </source>
</evidence>
<evidence type="ECO:0000269" key="14">
    <source>
    </source>
</evidence>
<evidence type="ECO:0000269" key="15">
    <source>
    </source>
</evidence>
<evidence type="ECO:0000269" key="16">
    <source>
    </source>
</evidence>
<evidence type="ECO:0000303" key="17">
    <source>
    </source>
</evidence>
<evidence type="ECO:0000303" key="18">
    <source>
    </source>
</evidence>
<evidence type="ECO:0000303" key="19">
    <source>
    </source>
</evidence>
<evidence type="ECO:0000303" key="20">
    <source>
    </source>
</evidence>
<evidence type="ECO:0000305" key="21"/>
<evidence type="ECO:0007744" key="22">
    <source>
    </source>
</evidence>
<evidence type="ECO:0007744" key="23">
    <source>
    </source>
</evidence>
<evidence type="ECO:0007829" key="24">
    <source>
        <dbReference type="PDB" id="1WR3"/>
    </source>
</evidence>
<evidence type="ECO:0007829" key="25">
    <source>
        <dbReference type="PDB" id="1WR4"/>
    </source>
</evidence>
<evidence type="ECO:0007829" key="26">
    <source>
        <dbReference type="PDB" id="1WR7"/>
    </source>
</evidence>
<accession>Q8CFI0</accession>
<accession>Q8BRT9</accession>
<accession>Q8BS42</accession>
<accession>Q99PK2</accession>
<name>NED4L_MOUSE</name>
<sequence length="1004" mass="115419">MSLCEAPVHVGDKELKYFQIPQMLSQLSLLASHHSRGLEFSGGQGESRILRVKVVSGIDLAKKDIFGASDPYVKLSLYVADENRELALVQTKTIKKTLNPKWNEEFYFRVNPSNHRLLFEVFDENRLTRDDFLGQVDVPLSHLPTEDPTMERPYTFKDFLLRPRSHKSRVKGFLRLKMAYMPKNGGQDEENSEQRDDMEHGWEVVDSNDSASQHQEELPPPPLPPGWEEKVDNLGRTYYVNHNNRSTQWHRPSLMDVSSESDNNIRQINQEAAHRRFRSRRHISEDLEPEASEGGGEGPEPWETISEEMNMAGDSLSLALPPPPASPVSRTSPQELSEEVSRRLQITPDSNGEQFSSLIQREPSSRLRSCSVTDTVAEQAHLPPPSTPTRRARSSTVTGGEEPTPSVAYVHTTPGLPSGWEERKDAKGRTYYVNHNNRTTTWTRPIMQLAEDGASGSATNSNNHLVEPQIRRPRSLSSPTVTLSAPLEGAKDSPIRRAVKDTLSNPQSPQPSPYNSPKPQHKVTQSFLPPGWEMRIAPNGRPFFIDHNTKTTTWEDPRLKFPVHMRSKASLNPNDLGPLPPGWEERIHLDGRTFYIDHNSKITQWEDPRLQNPAITGPAVPYSREFKQKYDYFRKKLKKPADIPNRFEMKLHRNNIFEESYRRIMSVKRPDVLKARLWIEFESEKGLDYGGVAREWFFLLSKEMFNPYYGLFEYSATDNYTLQINPNSGLCNEDHLSYFTFIGRVAGLAVFHGKLLDGFFIRPFYKMMLGKQITLNDMESVDSEYYNSLKWILENDPTELDLMFCIDEENFGQTYQVDLKPNGSEIMVTNENKREYIDLVIQWRFVNRVQKQMNAFLEGFTELLPIDLIKIFDENELELLMCGLGDVDVNDWRQHSIYKNGYCPNHPVIQWFWKAVLLMDAEKRIRLLQFVTGTSRVPMNGFAELYGSNGPQLFTIEQWGSPEKLPRAHTCFNRLDLPPYETFEDLREKLLMAVENAQGFEGVD</sequence>
<reference key="1">
    <citation type="journal article" date="2001" name="FASEB J.">
        <title>A novel mouse Nedd4 protein suppresses the activity of the epithelial Na+ channel.</title>
        <authorList>
            <person name="Kamynina E."/>
            <person name="Debonneville C."/>
            <person name="Bens M."/>
            <person name="Vandewalle A."/>
            <person name="Staub O."/>
        </authorList>
    </citation>
    <scope>NUCLEOTIDE SEQUENCE [MRNA] (ISOFORM 2)</scope>
    <scope>TISSUE SPECIFICITY</scope>
    <scope>FUNCTION</scope>
    <scope>MUTAGENESIS OF CYS-971</scope>
    <source>
        <strain>C57BL/6J</strain>
    </source>
</reference>
<reference key="2">
    <citation type="journal article" date="2003" name="FASEB J.">
        <title>The role of individual Nedd4-2 (KIAA0439) WW domains in binding and regulating epithelial sodium channels.</title>
        <authorList>
            <person name="Fotia A.B."/>
            <person name="Dinudom A."/>
            <person name="Shearwin K.E."/>
            <person name="Koch J.-P."/>
            <person name="Korbmacher C."/>
            <person name="Cook D.I."/>
            <person name="Kumar S."/>
        </authorList>
    </citation>
    <scope>NUCLEOTIDE SEQUENCE [MRNA] (ISOFORMS 1 AND 3)</scope>
    <scope>DOMAIN</scope>
    <scope>FUNCTION</scope>
    <source>
        <tissue>Brain</tissue>
    </source>
</reference>
<reference key="3">
    <citation type="journal article" date="2004" name="Genome Res.">
        <title>The status, quality, and expansion of the NIH full-length cDNA project: the Mammalian Gene Collection (MGC).</title>
        <authorList>
            <consortium name="The MGC Project Team"/>
        </authorList>
    </citation>
    <scope>NUCLEOTIDE SEQUENCE [LARGE SCALE MRNA] (ISOFORM 2)</scope>
    <source>
        <strain>FVB/N</strain>
        <tissue>Kidney</tissue>
        <tissue>Mammary gland</tissue>
    </source>
</reference>
<reference key="4">
    <citation type="journal article" date="2005" name="Science">
        <title>The transcriptional landscape of the mammalian genome.</title>
        <authorList>
            <person name="Carninci P."/>
            <person name="Kasukawa T."/>
            <person name="Katayama S."/>
            <person name="Gough J."/>
            <person name="Frith M.C."/>
            <person name="Maeda N."/>
            <person name="Oyama R."/>
            <person name="Ravasi T."/>
            <person name="Lenhard B."/>
            <person name="Wells C."/>
            <person name="Kodzius R."/>
            <person name="Shimokawa K."/>
            <person name="Bajic V.B."/>
            <person name="Brenner S.E."/>
            <person name="Batalov S."/>
            <person name="Forrest A.R."/>
            <person name="Zavolan M."/>
            <person name="Davis M.J."/>
            <person name="Wilming L.G."/>
            <person name="Aidinis V."/>
            <person name="Allen J.E."/>
            <person name="Ambesi-Impiombato A."/>
            <person name="Apweiler R."/>
            <person name="Aturaliya R.N."/>
            <person name="Bailey T.L."/>
            <person name="Bansal M."/>
            <person name="Baxter L."/>
            <person name="Beisel K.W."/>
            <person name="Bersano T."/>
            <person name="Bono H."/>
            <person name="Chalk A.M."/>
            <person name="Chiu K.P."/>
            <person name="Choudhary V."/>
            <person name="Christoffels A."/>
            <person name="Clutterbuck D.R."/>
            <person name="Crowe M.L."/>
            <person name="Dalla E."/>
            <person name="Dalrymple B.P."/>
            <person name="de Bono B."/>
            <person name="Della Gatta G."/>
            <person name="di Bernardo D."/>
            <person name="Down T."/>
            <person name="Engstrom P."/>
            <person name="Fagiolini M."/>
            <person name="Faulkner G."/>
            <person name="Fletcher C.F."/>
            <person name="Fukushima T."/>
            <person name="Furuno M."/>
            <person name="Futaki S."/>
            <person name="Gariboldi M."/>
            <person name="Georgii-Hemming P."/>
            <person name="Gingeras T.R."/>
            <person name="Gojobori T."/>
            <person name="Green R.E."/>
            <person name="Gustincich S."/>
            <person name="Harbers M."/>
            <person name="Hayashi Y."/>
            <person name="Hensch T.K."/>
            <person name="Hirokawa N."/>
            <person name="Hill D."/>
            <person name="Huminiecki L."/>
            <person name="Iacono M."/>
            <person name="Ikeo K."/>
            <person name="Iwama A."/>
            <person name="Ishikawa T."/>
            <person name="Jakt M."/>
            <person name="Kanapin A."/>
            <person name="Katoh M."/>
            <person name="Kawasawa Y."/>
            <person name="Kelso J."/>
            <person name="Kitamura H."/>
            <person name="Kitano H."/>
            <person name="Kollias G."/>
            <person name="Krishnan S.P."/>
            <person name="Kruger A."/>
            <person name="Kummerfeld S.K."/>
            <person name="Kurochkin I.V."/>
            <person name="Lareau L.F."/>
            <person name="Lazarevic D."/>
            <person name="Lipovich L."/>
            <person name="Liu J."/>
            <person name="Liuni S."/>
            <person name="McWilliam S."/>
            <person name="Madan Babu M."/>
            <person name="Madera M."/>
            <person name="Marchionni L."/>
            <person name="Matsuda H."/>
            <person name="Matsuzawa S."/>
            <person name="Miki H."/>
            <person name="Mignone F."/>
            <person name="Miyake S."/>
            <person name="Morris K."/>
            <person name="Mottagui-Tabar S."/>
            <person name="Mulder N."/>
            <person name="Nakano N."/>
            <person name="Nakauchi H."/>
            <person name="Ng P."/>
            <person name="Nilsson R."/>
            <person name="Nishiguchi S."/>
            <person name="Nishikawa S."/>
            <person name="Nori F."/>
            <person name="Ohara O."/>
            <person name="Okazaki Y."/>
            <person name="Orlando V."/>
            <person name="Pang K.C."/>
            <person name="Pavan W.J."/>
            <person name="Pavesi G."/>
            <person name="Pesole G."/>
            <person name="Petrovsky N."/>
            <person name="Piazza S."/>
            <person name="Reed J."/>
            <person name="Reid J.F."/>
            <person name="Ring B.Z."/>
            <person name="Ringwald M."/>
            <person name="Rost B."/>
            <person name="Ruan Y."/>
            <person name="Salzberg S.L."/>
            <person name="Sandelin A."/>
            <person name="Schneider C."/>
            <person name="Schoenbach C."/>
            <person name="Sekiguchi K."/>
            <person name="Semple C.A."/>
            <person name="Seno S."/>
            <person name="Sessa L."/>
            <person name="Sheng Y."/>
            <person name="Shibata Y."/>
            <person name="Shimada H."/>
            <person name="Shimada K."/>
            <person name="Silva D."/>
            <person name="Sinclair B."/>
            <person name="Sperling S."/>
            <person name="Stupka E."/>
            <person name="Sugiura K."/>
            <person name="Sultana R."/>
            <person name="Takenaka Y."/>
            <person name="Taki K."/>
            <person name="Tammoja K."/>
            <person name="Tan S.L."/>
            <person name="Tang S."/>
            <person name="Taylor M.S."/>
            <person name="Tegner J."/>
            <person name="Teichmann S.A."/>
            <person name="Ueda H.R."/>
            <person name="van Nimwegen E."/>
            <person name="Verardo R."/>
            <person name="Wei C.L."/>
            <person name="Yagi K."/>
            <person name="Yamanishi H."/>
            <person name="Zabarovsky E."/>
            <person name="Zhu S."/>
            <person name="Zimmer A."/>
            <person name="Hide W."/>
            <person name="Bult C."/>
            <person name="Grimmond S.M."/>
            <person name="Teasdale R.D."/>
            <person name="Liu E.T."/>
            <person name="Brusic V."/>
            <person name="Quackenbush J."/>
            <person name="Wahlestedt C."/>
            <person name="Mattick J.S."/>
            <person name="Hume D.A."/>
            <person name="Kai C."/>
            <person name="Sasaki D."/>
            <person name="Tomaru Y."/>
            <person name="Fukuda S."/>
            <person name="Kanamori-Katayama M."/>
            <person name="Suzuki M."/>
            <person name="Aoki J."/>
            <person name="Arakawa T."/>
            <person name="Iida J."/>
            <person name="Imamura K."/>
            <person name="Itoh M."/>
            <person name="Kato T."/>
            <person name="Kawaji H."/>
            <person name="Kawagashira N."/>
            <person name="Kawashima T."/>
            <person name="Kojima M."/>
            <person name="Kondo S."/>
            <person name="Konno H."/>
            <person name="Nakano K."/>
            <person name="Ninomiya N."/>
            <person name="Nishio T."/>
            <person name="Okada M."/>
            <person name="Plessy C."/>
            <person name="Shibata K."/>
            <person name="Shiraki T."/>
            <person name="Suzuki S."/>
            <person name="Tagami M."/>
            <person name="Waki K."/>
            <person name="Watahiki A."/>
            <person name="Okamura-Oho Y."/>
            <person name="Suzuki H."/>
            <person name="Kawai J."/>
            <person name="Hayashizaki Y."/>
        </authorList>
    </citation>
    <scope>NUCLEOTIDE SEQUENCE [LARGE SCALE MRNA] OF 44-1004 (ISOFORM 3)</scope>
    <source>
        <strain>C57BL/6J</strain>
        <tissue>Cerebellum</tissue>
    </source>
</reference>
<reference key="5">
    <citation type="journal article" date="2001" name="EMBO J.">
        <title>Phosphorylation of Nedd4-2 by Sgk1 regulates epithelial Na(+) channel cell surface expression.</title>
        <authorList>
            <person name="Debonneville C."/>
            <person name="Flores S.Y."/>
            <person name="Kamynina E."/>
            <person name="Plant P.J."/>
            <person name="Tauxe C."/>
            <person name="Thomas M.A."/>
            <person name="Muenster C."/>
            <person name="Chraiebi A."/>
            <person name="Pratt J.H."/>
            <person name="Horisberger J.-D."/>
            <person name="Pearce D."/>
            <person name="Loffing J."/>
            <person name="Staub O."/>
        </authorList>
    </citation>
    <scope>FUNCTION</scope>
    <scope>DOMAIN</scope>
    <scope>PHOSPHORYLATION AT SER-371 AND SER-477</scope>
    <scope>MUTAGENESIS OF SER-371 AND SER-477</scope>
</reference>
<reference key="6">
    <citation type="journal article" date="2001" name="J. Biol. Chem.">
        <title>The Nedd4-like protein KIAA0439 is a potential regulator of the epithelial sodium channel.</title>
        <authorList>
            <person name="Harvey K.F."/>
            <person name="Dinudom A."/>
            <person name="Cook D.I."/>
            <person name="Kumar S."/>
        </authorList>
    </citation>
    <scope>FUNCTION</scope>
    <scope>TISSUE SPECIFICITY</scope>
</reference>
<reference key="7">
    <citation type="journal article" date="2002" name="J. Biol. Chem.">
        <title>Regulation of the epithelial sodium channel by N4WBP5A, a novel Nedd4/Nedd4-2-interacting protein.</title>
        <authorList>
            <person name="Konstas A.-A."/>
            <person name="Shearwin-Whyatt L.M."/>
            <person name="Fotia A.B."/>
            <person name="Degger B."/>
            <person name="Riccardi D."/>
            <person name="Cook D.I."/>
            <person name="Korbmacher C."/>
            <person name="Kumar S."/>
        </authorList>
    </citation>
    <scope>INTERACTION WITH NDFIP2</scope>
    <scope>SUBCELLULAR LOCATION</scope>
</reference>
<reference key="8">
    <citation type="journal article" date="2004" name="J. Biol. Chem.">
        <title>Regulation of neuronal voltage-gated sodium channels by the ubiquitin-protein ligases Nedd4 and Nedd4-2.</title>
        <authorList>
            <person name="Fotia A.B."/>
            <person name="Ekberg J."/>
            <person name="Adams D.J."/>
            <person name="Cook D.I."/>
            <person name="Poronnik P."/>
            <person name="Kumar S."/>
        </authorList>
    </citation>
    <scope>FUNCTION</scope>
    <scope>INTERACTION WITH SCN1A; SCN2A; SCN3A; SCN5A; SCN8A; SCN9A AND SCN10A</scope>
    <scope>DOMAIN</scope>
</reference>
<reference key="9">
    <citation type="journal article" date="2004" name="Mol. Cell. Biol.">
        <title>Participation of the ubiquitin-conjugating enzyme UBE2E3 in Nedd4-2-dependent regulation of the epithelial Na+ channel.</title>
        <authorList>
            <person name="Debonneville C."/>
            <person name="Staub O."/>
        </authorList>
    </citation>
    <scope>INTERACTION WITH UBE2E3</scope>
</reference>
<reference key="10">
    <citation type="journal article" date="2005" name="J. Am. Soc. Nephrol.">
        <title>Aldosterone-induced serum and glucocorticoid-induced kinase 1 expression is accompanied by nedd4-2 phosphorylation and increased na+ transport in cortical collecting duct cells.</title>
        <authorList>
            <person name="Flores S.Y."/>
            <person name="Loffing-Cueni D."/>
            <person name="Kamynina E."/>
            <person name="Daidie D."/>
            <person name="Gerbex C."/>
            <person name="Chabanel S."/>
            <person name="Dudler J."/>
            <person name="Loffing J."/>
            <person name="Staub O."/>
        </authorList>
    </citation>
    <scope>PHOSPHORYLATION AT SER-477</scope>
</reference>
<reference key="11">
    <citation type="journal article" date="2007" name="Proc. Natl. Acad. Sci. U.S.A.">
        <title>Large-scale phosphorylation analysis of mouse liver.</title>
        <authorList>
            <person name="Villen J."/>
            <person name="Beausoleil S.A."/>
            <person name="Gerber S.A."/>
            <person name="Gygi S.P."/>
        </authorList>
    </citation>
    <scope>PHOSPHORYLATION [LARGE SCALE ANALYSIS] AT SER-508</scope>
    <scope>IDENTIFICATION BY MASS SPECTROMETRY [LARGE SCALE ANALYSIS]</scope>
    <source>
        <tissue>Liver</tissue>
    </source>
</reference>
<reference key="12">
    <citation type="journal article" date="2010" name="Cell">
        <title>A tissue-specific atlas of mouse protein phosphorylation and expression.</title>
        <authorList>
            <person name="Huttlin E.L."/>
            <person name="Jedrychowski M.P."/>
            <person name="Elias J.E."/>
            <person name="Goswami T."/>
            <person name="Rad R."/>
            <person name="Beausoleil S.A."/>
            <person name="Villen J."/>
            <person name="Haas W."/>
            <person name="Sowa M.E."/>
            <person name="Gygi S.P."/>
        </authorList>
    </citation>
    <scope>PHOSPHORYLATION [LARGE SCALE ANALYSIS] AT SER-478; SER-493; SER-508; SER-512 AND SER-516</scope>
    <scope>IDENTIFICATION BY MASS SPECTROMETRY [LARGE SCALE ANALYSIS]</scope>
    <source>
        <tissue>Brain</tissue>
        <tissue>Brown adipose tissue</tissue>
        <tissue>Heart</tissue>
        <tissue>Kidney</tissue>
        <tissue>Lung</tissue>
        <tissue>Pancreas</tissue>
        <tissue>Spleen</tissue>
        <tissue>Testis</tissue>
    </source>
</reference>
<reference key="13">
    <citation type="journal article" date="2016" name="Nat. Genet.">
        <title>Mutations in the HECT domain of NEDD4L lead to AKT-mTOR pathway deregulation and cause periventricular nodular heterotopia.</title>
        <authorList>
            <consortium name="Deciphering Developmental Disorders study"/>
            <person name="Broix L."/>
            <person name="Jagline H."/>
            <person name="Ivanova L.E."/>
            <person name="Schmucker S."/>
            <person name="Drouot N."/>
            <person name="Clayton-Smith J."/>
            <person name="Pagnamenta A.T."/>
            <person name="Metcalfe K.A."/>
            <person name="Isidor B."/>
            <person name="Louvier U.W."/>
            <person name="Poduri A."/>
            <person name="Taylor J.C."/>
            <person name="Tilly P."/>
            <person name="Poirier K."/>
            <person name="Saillour Y."/>
            <person name="Lebrun N."/>
            <person name="Stemmelen T."/>
            <person name="Rudolf G."/>
            <person name="Muraca G."/>
            <person name="Saintpierre B."/>
            <person name="Elmorjani A."/>
            <person name="Moise M."/>
            <person name="Weirauch N.B."/>
            <person name="Guerrini R."/>
            <person name="Boland A."/>
            <person name="Olaso R."/>
            <person name="Masson C."/>
            <person name="Tripathy R."/>
            <person name="Keays D."/>
            <person name="Beldjord C."/>
            <person name="Nguyen L."/>
            <person name="Godin J."/>
            <person name="Kini U."/>
            <person name="Nischke P."/>
            <person name="Deleuze J.F."/>
            <person name="Bahi-Buisson N."/>
            <person name="Sumara I."/>
            <person name="Hinckelmann M.V."/>
            <person name="Chelly J."/>
        </authorList>
    </citation>
    <scope>DEVELOPMENTAL STAGE</scope>
</reference>
<reference key="14">
    <citation type="submission" date="2005-10" db="PDB data bank">
        <title>Solution structures of WW domains of NEDD4-2.</title>
        <authorList>
            <person name="Kowalski K."/>
            <person name="Merkel A.L."/>
            <person name="Booker G.W."/>
        </authorList>
    </citation>
    <scope>STRUCTURE BY NMR OF 221-254; 414-447 AND 525-560</scope>
</reference>
<feature type="chain" id="PRO_0000120324" description="E3 ubiquitin-protein ligase NEDD4-like">
    <location>
        <begin position="1"/>
        <end position="1004"/>
    </location>
</feature>
<feature type="domain" description="C2" evidence="4">
    <location>
        <begin position="30"/>
        <end position="154"/>
    </location>
</feature>
<feature type="domain" description="WW 1" evidence="6">
    <location>
        <begin position="221"/>
        <end position="254"/>
    </location>
</feature>
<feature type="domain" description="WW 2" evidence="6">
    <location>
        <begin position="414"/>
        <end position="447"/>
    </location>
</feature>
<feature type="domain" description="WW 3" evidence="6">
    <location>
        <begin position="526"/>
        <end position="559"/>
    </location>
</feature>
<feature type="domain" description="WW 4" evidence="6">
    <location>
        <begin position="577"/>
        <end position="610"/>
    </location>
</feature>
<feature type="domain" description="HECT" evidence="5">
    <location>
        <begin position="669"/>
        <end position="1003"/>
    </location>
</feature>
<feature type="region of interest" description="Disordered" evidence="7">
    <location>
        <begin position="207"/>
        <end position="230"/>
    </location>
</feature>
<feature type="region of interest" description="Disordered" evidence="7">
    <location>
        <begin position="272"/>
        <end position="407"/>
    </location>
</feature>
<feature type="region of interest" description="Disordered" evidence="7">
    <location>
        <begin position="453"/>
        <end position="523"/>
    </location>
</feature>
<feature type="compositionally biased region" description="Polar residues" evidence="7">
    <location>
        <begin position="347"/>
        <end position="359"/>
    </location>
</feature>
<feature type="compositionally biased region" description="Polar residues" evidence="7">
    <location>
        <begin position="366"/>
        <end position="376"/>
    </location>
</feature>
<feature type="compositionally biased region" description="Basic and acidic residues" evidence="7">
    <location>
        <begin position="489"/>
        <end position="500"/>
    </location>
</feature>
<feature type="active site" description="Glycyl thioester intermediate" evidence="5">
    <location>
        <position position="971"/>
    </location>
</feature>
<feature type="modified residue" description="Phosphoserine" evidence="3">
    <location>
        <position position="341"/>
    </location>
</feature>
<feature type="modified residue" description="Phosphothreonine" evidence="3">
    <location>
        <position position="347"/>
    </location>
</feature>
<feature type="modified residue" description="Phosphoserine; by WNK1 and WNK4" evidence="10">
    <location>
        <position position="371"/>
    </location>
</feature>
<feature type="modified residue" description="Phosphothreonine; by SGK1" evidence="3">
    <location>
        <position position="396"/>
    </location>
</feature>
<feature type="modified residue" description="Phosphoserine" evidence="3">
    <location>
        <position position="475"/>
    </location>
</feature>
<feature type="modified residue" description="Phosphoserine; by SGK1" evidence="10 15">
    <location>
        <position position="477"/>
    </location>
</feature>
<feature type="modified residue" description="Phosphoserine" evidence="23">
    <location>
        <position position="478"/>
    </location>
</feature>
<feature type="modified residue" description="Phosphoserine" evidence="23">
    <location>
        <position position="493"/>
    </location>
</feature>
<feature type="modified residue" description="Phosphoserine" evidence="3">
    <location>
        <position position="504"/>
    </location>
</feature>
<feature type="modified residue" description="Phosphoserine" evidence="22 23">
    <location>
        <position position="508"/>
    </location>
</feature>
<feature type="modified residue" description="Phosphoserine" evidence="23">
    <location>
        <position position="512"/>
    </location>
</feature>
<feature type="modified residue" description="Phosphoserine" evidence="23">
    <location>
        <position position="516"/>
    </location>
</feature>
<feature type="splice variant" id="VSP_015450" description="In isoform 2." evidence="17 19">
    <location>
        <begin position="1"/>
        <end position="149"/>
    </location>
</feature>
<feature type="splice variant" id="VSP_015453" description="In isoform 3." evidence="18 20">
    <location>
        <begin position="385"/>
        <end position="404"/>
    </location>
</feature>
<feature type="mutagenesis site" description="Weakly reduces phosphorylation by SGK1." evidence="10">
    <original>S</original>
    <variation>A</variation>
    <location>
        <position position="371"/>
    </location>
</feature>
<feature type="mutagenesis site" description="Strongly reduces phosphorylation by SGK1." evidence="10">
    <original>S</original>
    <variation>A</variation>
    <location>
        <position position="477"/>
    </location>
</feature>
<feature type="mutagenesis site" description="Abolishes activity." evidence="8">
    <original>C</original>
    <variation>S</variation>
    <location>
        <position position="971"/>
    </location>
</feature>
<feature type="sequence conflict" description="In Ref. 1; AAK00809." evidence="21" ref="1">
    <original>A</original>
    <variation>G</variation>
    <location>
        <position position="179"/>
    </location>
</feature>
<feature type="sequence conflict" description="In Ref. 1; AAK00809." evidence="21" ref="1">
    <original>R</original>
    <variation>G</variation>
    <location>
        <position position="390"/>
    </location>
</feature>
<feature type="sequence conflict" description="In Ref. 1; AAK00809." evidence="21" ref="1">
    <original>P</original>
    <variation>S</variation>
    <location>
        <position position="403"/>
    </location>
</feature>
<feature type="sequence conflict" description="In Ref. 1; AAK00809." evidence="21" ref="1">
    <original>E</original>
    <variation>G</variation>
    <location>
        <position position="585"/>
    </location>
</feature>
<feature type="sequence conflict" description="In Ref. 1; AAK00809." evidence="21" ref="1">
    <original>N</original>
    <variation>T</variation>
    <location>
        <position position="832"/>
    </location>
</feature>
<feature type="sequence conflict" description="In Ref. 1; AAK00809." evidence="21" ref="1">
    <original>N</original>
    <variation>D</variation>
    <location>
        <position position="847"/>
    </location>
</feature>
<feature type="sequence conflict" description="In Ref. 4; BAC31307." evidence="21" ref="4">
    <original>N</original>
    <variation>K</variation>
    <location>
        <position position="949"/>
    </location>
</feature>
<feature type="strand" evidence="24">
    <location>
        <begin position="227"/>
        <end position="231"/>
    </location>
</feature>
<feature type="strand" evidence="24">
    <location>
        <begin position="233"/>
        <end position="235"/>
    </location>
</feature>
<feature type="strand" evidence="24">
    <location>
        <begin position="237"/>
        <end position="241"/>
    </location>
</feature>
<feature type="turn" evidence="24">
    <location>
        <begin position="242"/>
        <end position="244"/>
    </location>
</feature>
<feature type="strand" evidence="24">
    <location>
        <begin position="247"/>
        <end position="250"/>
    </location>
</feature>
<feature type="strand" evidence="25">
    <location>
        <begin position="420"/>
        <end position="424"/>
    </location>
</feature>
<feature type="strand" evidence="25">
    <location>
        <begin position="426"/>
        <end position="428"/>
    </location>
</feature>
<feature type="strand" evidence="25">
    <location>
        <begin position="430"/>
        <end position="434"/>
    </location>
</feature>
<feature type="turn" evidence="25">
    <location>
        <begin position="435"/>
        <end position="438"/>
    </location>
</feature>
<feature type="strand" evidence="25">
    <location>
        <begin position="439"/>
        <end position="443"/>
    </location>
</feature>
<feature type="strand" evidence="26">
    <location>
        <begin position="532"/>
        <end position="536"/>
    </location>
</feature>
<feature type="strand" evidence="26">
    <location>
        <begin position="542"/>
        <end position="546"/>
    </location>
</feature>
<feature type="turn" evidence="26">
    <location>
        <begin position="547"/>
        <end position="550"/>
    </location>
</feature>
<feature type="strand" evidence="26">
    <location>
        <begin position="551"/>
        <end position="555"/>
    </location>
</feature>
<feature type="helix" evidence="26">
    <location>
        <begin position="557"/>
        <end position="559"/>
    </location>
</feature>